<comment type="function">
    <text evidence="1">Component of the Mediator complex, a coactivator involved in the regulated transcription of nearly all RNA polymerase II-dependent genes. Mediator functions as a bridge to convey information from gene-specific regulatory proteins to the basal RNA polymerase II transcription machinery. Mediator is recruited to promoters by direct interactions with regulatory proteins and serves as a scaffold for the assembly of a functional preinitiation complex with RNA polymerase II and the general transcription factors (By similarity).</text>
</comment>
<comment type="subunit">
    <text evidence="1">Component of the Mediator complex.</text>
</comment>
<comment type="subcellular location">
    <subcellularLocation>
        <location evidence="1">Nucleus</location>
    </subcellularLocation>
</comment>
<comment type="similarity">
    <text evidence="4">Belongs to the Mediator complex subunit 21 family.</text>
</comment>
<comment type="sequence caution" evidence="4">
    <conflict type="erroneous gene model prediction">
        <sequence resource="EMBL-CDS" id="EAT79299"/>
    </conflict>
</comment>
<sequence length="155" mass="17476">MSDKLTQIQDELDALLNMMQRQIAHIVLQAPPSVPPGQHRVDTMPEIKGKAASENPQSNPPQPAEPPVPEKISPEQFNQDLKEFSRDIVVKQQQVELLIASLPGLNVSEEQQVARMKELEKELEGLEDERAQAVREKEVLLKKVEDKIMSVGRSR</sequence>
<feature type="chain" id="PRO_0000305968" description="Mediator of RNA polymerase II transcription subunit 21">
    <location>
        <begin position="1"/>
        <end position="155"/>
    </location>
</feature>
<feature type="region of interest" description="Disordered" evidence="3">
    <location>
        <begin position="29"/>
        <end position="73"/>
    </location>
</feature>
<feature type="coiled-coil region" evidence="2">
    <location>
        <begin position="75"/>
        <end position="147"/>
    </location>
</feature>
<feature type="compositionally biased region" description="Basic and acidic residues" evidence="3">
    <location>
        <begin position="39"/>
        <end position="51"/>
    </location>
</feature>
<feature type="compositionally biased region" description="Pro residues" evidence="3">
    <location>
        <begin position="58"/>
        <end position="69"/>
    </location>
</feature>
<name>MED21_PHANO</name>
<gene>
    <name type="primary">SRB7</name>
    <name type="synonym">MED21</name>
    <name type="ORF">SNOG_13415</name>
</gene>
<proteinExistence type="inferred from homology"/>
<organism>
    <name type="scientific">Phaeosphaeria nodorum (strain SN15 / ATCC MYA-4574 / FGSC 10173)</name>
    <name type="common">Glume blotch fungus</name>
    <name type="synonym">Parastagonospora nodorum</name>
    <dbReference type="NCBI Taxonomy" id="321614"/>
    <lineage>
        <taxon>Eukaryota</taxon>
        <taxon>Fungi</taxon>
        <taxon>Dikarya</taxon>
        <taxon>Ascomycota</taxon>
        <taxon>Pezizomycotina</taxon>
        <taxon>Dothideomycetes</taxon>
        <taxon>Pleosporomycetidae</taxon>
        <taxon>Pleosporales</taxon>
        <taxon>Pleosporineae</taxon>
        <taxon>Phaeosphaeriaceae</taxon>
        <taxon>Parastagonospora</taxon>
    </lineage>
</organism>
<reference key="1">
    <citation type="journal article" date="2007" name="Plant Cell">
        <title>Dothideomycete-plant interactions illuminated by genome sequencing and EST analysis of the wheat pathogen Stagonospora nodorum.</title>
        <authorList>
            <person name="Hane J.K."/>
            <person name="Lowe R.G.T."/>
            <person name="Solomon P.S."/>
            <person name="Tan K.-C."/>
            <person name="Schoch C.L."/>
            <person name="Spatafora J.W."/>
            <person name="Crous P.W."/>
            <person name="Kodira C.D."/>
            <person name="Birren B.W."/>
            <person name="Galagan J.E."/>
            <person name="Torriani S.F.F."/>
            <person name="McDonald B.A."/>
            <person name="Oliver R.P."/>
        </authorList>
    </citation>
    <scope>NUCLEOTIDE SEQUENCE [LARGE SCALE GENOMIC DNA]</scope>
    <source>
        <strain>SN15 / ATCC MYA-4574 / FGSC 10173</strain>
    </source>
</reference>
<protein>
    <recommendedName>
        <fullName>Mediator of RNA polymerase II transcription subunit 21</fullName>
    </recommendedName>
    <alternativeName>
        <fullName>Mediator complex subunit 21</fullName>
    </alternativeName>
</protein>
<evidence type="ECO:0000250" key="1"/>
<evidence type="ECO:0000255" key="2"/>
<evidence type="ECO:0000256" key="3">
    <source>
        <dbReference type="SAM" id="MobiDB-lite"/>
    </source>
</evidence>
<evidence type="ECO:0000305" key="4"/>
<keyword id="KW-0010">Activator</keyword>
<keyword id="KW-0175">Coiled coil</keyword>
<keyword id="KW-0539">Nucleus</keyword>
<keyword id="KW-0804">Transcription</keyword>
<keyword id="KW-0805">Transcription regulation</keyword>
<dbReference type="EMBL" id="CH445350">
    <property type="protein sequence ID" value="EAT79299.2"/>
    <property type="status" value="ALT_SEQ"/>
    <property type="molecule type" value="Genomic_DNA"/>
</dbReference>
<dbReference type="RefSeq" id="XP_001803627.1">
    <property type="nucleotide sequence ID" value="XM_001803575.1"/>
</dbReference>
<dbReference type="SMR" id="Q0U499"/>
<dbReference type="FunCoup" id="Q0U499">
    <property type="interactions" value="244"/>
</dbReference>
<dbReference type="STRING" id="321614.Q0U499"/>
<dbReference type="GeneID" id="5980544"/>
<dbReference type="KEGG" id="pno:SNOG_13415"/>
<dbReference type="VEuPathDB" id="FungiDB:JI435_134150"/>
<dbReference type="eggNOG" id="KOG1510">
    <property type="taxonomic scope" value="Eukaryota"/>
</dbReference>
<dbReference type="InParanoid" id="Q0U499"/>
<dbReference type="OMA" id="LTTYHDH"/>
<dbReference type="OrthoDB" id="526653at2759"/>
<dbReference type="Proteomes" id="UP000001055">
    <property type="component" value="Unassembled WGS sequence"/>
</dbReference>
<dbReference type="GO" id="GO:0016592">
    <property type="term" value="C:mediator complex"/>
    <property type="evidence" value="ECO:0000318"/>
    <property type="project" value="GO_Central"/>
</dbReference>
<dbReference type="GO" id="GO:0003712">
    <property type="term" value="F:transcription coregulator activity"/>
    <property type="evidence" value="ECO:0000318"/>
    <property type="project" value="GO_Central"/>
</dbReference>
<dbReference type="GO" id="GO:0006357">
    <property type="term" value="P:regulation of transcription by RNA polymerase II"/>
    <property type="evidence" value="ECO:0000318"/>
    <property type="project" value="GO_Central"/>
</dbReference>
<dbReference type="Gene3D" id="6.10.280.10">
    <property type="entry name" value="Mediator complex, subunit Med21"/>
    <property type="match status" value="1"/>
</dbReference>
<dbReference type="InterPro" id="IPR037212">
    <property type="entry name" value="Med7/Med21-like"/>
</dbReference>
<dbReference type="InterPro" id="IPR021384">
    <property type="entry name" value="Mediator_Med21"/>
</dbReference>
<dbReference type="PANTHER" id="PTHR13381:SF0">
    <property type="entry name" value="MEDIATOR OF RNA POLYMERASE II TRANSCRIPTION SUBUNIT 21"/>
    <property type="match status" value="1"/>
</dbReference>
<dbReference type="PANTHER" id="PTHR13381">
    <property type="entry name" value="RNA POLYMERASE II HOLOENZYME COMPONENT SRB7"/>
    <property type="match status" value="1"/>
</dbReference>
<dbReference type="Pfam" id="PF11221">
    <property type="entry name" value="Med21"/>
    <property type="match status" value="1"/>
</dbReference>
<dbReference type="SUPFAM" id="SSF140718">
    <property type="entry name" value="Mediator hinge subcomplex-like"/>
    <property type="match status" value="1"/>
</dbReference>
<accession>Q0U499</accession>